<evidence type="ECO:0000250" key="1"/>
<evidence type="ECO:0000250" key="2">
    <source>
        <dbReference type="UniProtKB" id="O75477"/>
    </source>
</evidence>
<evidence type="ECO:0000255" key="3"/>
<evidence type="ECO:0000256" key="4">
    <source>
        <dbReference type="SAM" id="MobiDB-lite"/>
    </source>
</evidence>
<evidence type="ECO:0000305" key="5"/>
<comment type="function">
    <text evidence="2">Component of the ERLIN1/ERLIN2 complex which mediates the endoplasmic reticulum-associated degradation (ERAD) of inositol 1,4,5-trisphosphate receptors (IP3Rs). Involved in regulation of cellular cholesterol homeostasis by regulation the SREBP signaling pathway. Binds cholesterol and may promote ER retention of the SCAP-SREBF complex (By similarity).</text>
</comment>
<comment type="subunit">
    <text evidence="2">Forms a heteromeric complex with ERLIN2. In complex with ERLIN2, interacts with RNF170. Interacts with AMFR and SYVN1 (By similarity).</text>
</comment>
<comment type="subcellular location">
    <subcellularLocation>
        <location evidence="1">Endoplasmic reticulum membrane</location>
        <topology evidence="1">Single-pass type II membrane protein</topology>
    </subcellularLocation>
    <text evidence="1">Associated with lipid raft-like domains of the endoplasmic reticulum membrane.</text>
</comment>
<comment type="PTM">
    <text evidence="2">Deubiquitinated by USP25; leading to stabilization.</text>
</comment>
<comment type="similarity">
    <text evidence="5">Belongs to the band 7/mec-2 family.</text>
</comment>
<accession>Q5RCJ9</accession>
<protein>
    <recommendedName>
        <fullName evidence="2">Erlin-1</fullName>
    </recommendedName>
    <alternativeName>
        <fullName>Endoplasmic reticulum lipid raft-associated protein 1</fullName>
    </alternativeName>
    <alternativeName>
        <fullName>Stomatin-prohibitin-flotillin-HflC/K domain-containing protein 1</fullName>
        <shortName>SPFH domain-containing protein 1</shortName>
    </alternativeName>
</protein>
<dbReference type="EMBL" id="CR858271">
    <property type="protein sequence ID" value="CAH90508.1"/>
    <property type="molecule type" value="mRNA"/>
</dbReference>
<dbReference type="RefSeq" id="NP_001125267.1">
    <property type="nucleotide sequence ID" value="NM_001131795.1"/>
</dbReference>
<dbReference type="RefSeq" id="XP_024108755.1">
    <property type="nucleotide sequence ID" value="XM_024252987.3"/>
</dbReference>
<dbReference type="SMR" id="Q5RCJ9"/>
<dbReference type="FunCoup" id="Q5RCJ9">
    <property type="interactions" value="1222"/>
</dbReference>
<dbReference type="STRING" id="9601.ENSPPYP00000002973"/>
<dbReference type="GlyCosmos" id="Q5RCJ9">
    <property type="glycosylation" value="1 site, No reported glycans"/>
</dbReference>
<dbReference type="Ensembl" id="ENSPPYT00000059003.1">
    <property type="protein sequence ID" value="ENSPPYP00000034475.1"/>
    <property type="gene ID" value="ENSPPYG00000002560.2"/>
</dbReference>
<dbReference type="GeneID" id="100172164"/>
<dbReference type="KEGG" id="pon:100172164"/>
<dbReference type="CTD" id="10613"/>
<dbReference type="GeneTree" id="ENSGT00390000014666"/>
<dbReference type="InParanoid" id="Q5RCJ9"/>
<dbReference type="OMA" id="HIMIPIL"/>
<dbReference type="OrthoDB" id="77368at2759"/>
<dbReference type="Proteomes" id="UP000001595">
    <property type="component" value="Chromosome 10"/>
</dbReference>
<dbReference type="GO" id="GO:0005789">
    <property type="term" value="C:endoplasmic reticulum membrane"/>
    <property type="evidence" value="ECO:0000250"/>
    <property type="project" value="UniProtKB"/>
</dbReference>
<dbReference type="GO" id="GO:0032991">
    <property type="term" value="C:protein-containing complex"/>
    <property type="evidence" value="ECO:0007669"/>
    <property type="project" value="Ensembl"/>
</dbReference>
<dbReference type="GO" id="GO:0015485">
    <property type="term" value="F:cholesterol binding"/>
    <property type="evidence" value="ECO:0007669"/>
    <property type="project" value="Ensembl"/>
</dbReference>
<dbReference type="GO" id="GO:0031625">
    <property type="term" value="F:ubiquitin protein ligase binding"/>
    <property type="evidence" value="ECO:0007669"/>
    <property type="project" value="InterPro"/>
</dbReference>
<dbReference type="GO" id="GO:0008203">
    <property type="term" value="P:cholesterol metabolic process"/>
    <property type="evidence" value="ECO:0007669"/>
    <property type="project" value="UniProtKB-KW"/>
</dbReference>
<dbReference type="GO" id="GO:0036503">
    <property type="term" value="P:ERAD pathway"/>
    <property type="evidence" value="ECO:0007669"/>
    <property type="project" value="Ensembl"/>
</dbReference>
<dbReference type="GO" id="GO:0045541">
    <property type="term" value="P:negative regulation of cholesterol biosynthetic process"/>
    <property type="evidence" value="ECO:0007669"/>
    <property type="project" value="Ensembl"/>
</dbReference>
<dbReference type="GO" id="GO:0045717">
    <property type="term" value="P:negative regulation of fatty acid biosynthetic process"/>
    <property type="evidence" value="ECO:0007669"/>
    <property type="project" value="Ensembl"/>
</dbReference>
<dbReference type="GO" id="GO:0032933">
    <property type="term" value="P:SREBP signaling pathway"/>
    <property type="evidence" value="ECO:0007669"/>
    <property type="project" value="Ensembl"/>
</dbReference>
<dbReference type="CDD" id="cd03406">
    <property type="entry name" value="SPFH_like_u3"/>
    <property type="match status" value="1"/>
</dbReference>
<dbReference type="FunFam" id="3.30.479.30:FF:000009">
    <property type="entry name" value="Erlin-2 isoform 1"/>
    <property type="match status" value="1"/>
</dbReference>
<dbReference type="Gene3D" id="3.30.479.30">
    <property type="entry name" value="Band 7 domain"/>
    <property type="match status" value="1"/>
</dbReference>
<dbReference type="InterPro" id="IPR001107">
    <property type="entry name" value="Band_7"/>
</dbReference>
<dbReference type="InterPro" id="IPR036013">
    <property type="entry name" value="Band_7/SPFH_dom_sf"/>
</dbReference>
<dbReference type="InterPro" id="IPR033294">
    <property type="entry name" value="Erlin1/2"/>
</dbReference>
<dbReference type="PANTHER" id="PTHR15351">
    <property type="entry name" value="ERLIN (ER LIPID RAFT ASSOCIATED PROTEIN) HOMOLOG"/>
    <property type="match status" value="1"/>
</dbReference>
<dbReference type="PANTHER" id="PTHR15351:SF2">
    <property type="entry name" value="ERLIN-1"/>
    <property type="match status" value="1"/>
</dbReference>
<dbReference type="Pfam" id="PF01145">
    <property type="entry name" value="Band_7"/>
    <property type="match status" value="1"/>
</dbReference>
<dbReference type="SMART" id="SM00244">
    <property type="entry name" value="PHB"/>
    <property type="match status" value="1"/>
</dbReference>
<dbReference type="SUPFAM" id="SSF117892">
    <property type="entry name" value="Band 7/SPFH domain"/>
    <property type="match status" value="1"/>
</dbReference>
<name>ERLN1_PONAB</name>
<proteinExistence type="evidence at transcript level"/>
<keyword id="KW-0007">Acetylation</keyword>
<keyword id="KW-0153">Cholesterol metabolism</keyword>
<keyword id="KW-0256">Endoplasmic reticulum</keyword>
<keyword id="KW-0325">Glycoprotein</keyword>
<keyword id="KW-0443">Lipid metabolism</keyword>
<keyword id="KW-0446">Lipid-binding</keyword>
<keyword id="KW-0472">Membrane</keyword>
<keyword id="KW-1185">Reference proteome</keyword>
<keyword id="KW-0735">Signal-anchor</keyword>
<keyword id="KW-0753">Steroid metabolism</keyword>
<keyword id="KW-1207">Sterol metabolism</keyword>
<keyword id="KW-0812">Transmembrane</keyword>
<keyword id="KW-1133">Transmembrane helix</keyword>
<gene>
    <name evidence="2" type="primary">ERLIN1</name>
    <name type="synonym">SPFH1</name>
</gene>
<reference key="1">
    <citation type="submission" date="2004-11" db="EMBL/GenBank/DDBJ databases">
        <authorList>
            <consortium name="The German cDNA consortium"/>
        </authorList>
    </citation>
    <scope>NUCLEOTIDE SEQUENCE [LARGE SCALE MRNA]</scope>
    <source>
        <tissue>Kidney</tissue>
    </source>
</reference>
<sequence>MNMTQARVLVAAVVGLVAVLLYASIHKIEEGHLAVYYRGGALLTSPSGPGYHIMLPFITTFRSVQTTLQTDEVKNVPCGTSGGVMIYIDRIEVVNMLAPYAVFDIVRNYTADYDKTLIFNKIHHELNQFCSAHTLQEVYIELFDQIDENLKQALQKDLNLMAPGLTIQAVRVTKPKIPEAIRRNFELMEAEKTKLLIAAQKQKVVEKEAETERKKAVIEAEKIAQVAKIRFQQKVMEKETEKRISEIEDAAFLAREKAKADAEYYAAHKYATSNKHKLTPEYLELKKYQAIASNSKIYFGSNIPNMFVDSSCALKYSDIRTGRESSHPSKEALEPSGENLIQNKESTG</sequence>
<organism>
    <name type="scientific">Pongo abelii</name>
    <name type="common">Sumatran orangutan</name>
    <name type="synonym">Pongo pygmaeus abelii</name>
    <dbReference type="NCBI Taxonomy" id="9601"/>
    <lineage>
        <taxon>Eukaryota</taxon>
        <taxon>Metazoa</taxon>
        <taxon>Chordata</taxon>
        <taxon>Craniata</taxon>
        <taxon>Vertebrata</taxon>
        <taxon>Euteleostomi</taxon>
        <taxon>Mammalia</taxon>
        <taxon>Eutheria</taxon>
        <taxon>Euarchontoglires</taxon>
        <taxon>Primates</taxon>
        <taxon>Haplorrhini</taxon>
        <taxon>Catarrhini</taxon>
        <taxon>Hominidae</taxon>
        <taxon>Pongo</taxon>
    </lineage>
</organism>
<feature type="chain" id="PRO_0000002786" description="Erlin-1">
    <location>
        <begin position="1"/>
        <end position="348"/>
    </location>
</feature>
<feature type="topological domain" description="Cytoplasmic" evidence="3">
    <location>
        <begin position="1"/>
        <end position="7"/>
    </location>
</feature>
<feature type="transmembrane region" description="Helical" evidence="3">
    <location>
        <begin position="8"/>
        <end position="28"/>
    </location>
</feature>
<feature type="topological domain" description="Lumenal" evidence="3">
    <location>
        <begin position="29"/>
        <end position="348"/>
    </location>
</feature>
<feature type="region of interest" description="Disordered" evidence="4">
    <location>
        <begin position="321"/>
        <end position="348"/>
    </location>
</feature>
<feature type="compositionally biased region" description="Basic and acidic residues" evidence="4">
    <location>
        <begin position="321"/>
        <end position="333"/>
    </location>
</feature>
<feature type="compositionally biased region" description="Polar residues" evidence="4">
    <location>
        <begin position="339"/>
        <end position="348"/>
    </location>
</feature>
<feature type="modified residue" description="N6-acetyllysine" evidence="2">
    <location>
        <position position="269"/>
    </location>
</feature>
<feature type="glycosylation site" description="N-linked (GlcNAc...) asparagine" evidence="3">
    <location>
        <position position="108"/>
    </location>
</feature>